<dbReference type="EMBL" id="CP000308">
    <property type="protein sequence ID" value="ABG13891.1"/>
    <property type="molecule type" value="Genomic_DNA"/>
</dbReference>
<dbReference type="RefSeq" id="WP_002220787.1">
    <property type="nucleotide sequence ID" value="NZ_CP009906.1"/>
</dbReference>
<dbReference type="SMR" id="Q1C6N1"/>
<dbReference type="GeneID" id="97455792"/>
<dbReference type="KEGG" id="ypa:YPA_1925"/>
<dbReference type="UniPathway" id="UPA00094"/>
<dbReference type="Proteomes" id="UP000001971">
    <property type="component" value="Chromosome"/>
</dbReference>
<dbReference type="GO" id="GO:0005829">
    <property type="term" value="C:cytosol"/>
    <property type="evidence" value="ECO:0007669"/>
    <property type="project" value="TreeGrafter"/>
</dbReference>
<dbReference type="GO" id="GO:0016020">
    <property type="term" value="C:membrane"/>
    <property type="evidence" value="ECO:0007669"/>
    <property type="project" value="GOC"/>
</dbReference>
<dbReference type="GO" id="GO:0000035">
    <property type="term" value="F:acyl binding"/>
    <property type="evidence" value="ECO:0007669"/>
    <property type="project" value="TreeGrafter"/>
</dbReference>
<dbReference type="GO" id="GO:0000036">
    <property type="term" value="F:acyl carrier activity"/>
    <property type="evidence" value="ECO:0007669"/>
    <property type="project" value="UniProtKB-UniRule"/>
</dbReference>
<dbReference type="GO" id="GO:0009245">
    <property type="term" value="P:lipid A biosynthetic process"/>
    <property type="evidence" value="ECO:0007669"/>
    <property type="project" value="TreeGrafter"/>
</dbReference>
<dbReference type="FunFam" id="1.10.1200.10:FF:000001">
    <property type="entry name" value="Acyl carrier protein"/>
    <property type="match status" value="1"/>
</dbReference>
<dbReference type="Gene3D" id="1.10.1200.10">
    <property type="entry name" value="ACP-like"/>
    <property type="match status" value="1"/>
</dbReference>
<dbReference type="HAMAP" id="MF_01217">
    <property type="entry name" value="Acyl_carrier"/>
    <property type="match status" value="1"/>
</dbReference>
<dbReference type="InterPro" id="IPR003231">
    <property type="entry name" value="ACP"/>
</dbReference>
<dbReference type="InterPro" id="IPR036736">
    <property type="entry name" value="ACP-like_sf"/>
</dbReference>
<dbReference type="InterPro" id="IPR009081">
    <property type="entry name" value="PP-bd_ACP"/>
</dbReference>
<dbReference type="InterPro" id="IPR006162">
    <property type="entry name" value="Ppantetheine_attach_site"/>
</dbReference>
<dbReference type="NCBIfam" id="TIGR00517">
    <property type="entry name" value="acyl_carrier"/>
    <property type="match status" value="1"/>
</dbReference>
<dbReference type="NCBIfam" id="NF002148">
    <property type="entry name" value="PRK00982.1-2"/>
    <property type="match status" value="1"/>
</dbReference>
<dbReference type="NCBIfam" id="NF002149">
    <property type="entry name" value="PRK00982.1-3"/>
    <property type="match status" value="1"/>
</dbReference>
<dbReference type="NCBIfam" id="NF002150">
    <property type="entry name" value="PRK00982.1-4"/>
    <property type="match status" value="1"/>
</dbReference>
<dbReference type="NCBIfam" id="NF002151">
    <property type="entry name" value="PRK00982.1-5"/>
    <property type="match status" value="1"/>
</dbReference>
<dbReference type="PANTHER" id="PTHR20863">
    <property type="entry name" value="ACYL CARRIER PROTEIN"/>
    <property type="match status" value="1"/>
</dbReference>
<dbReference type="PANTHER" id="PTHR20863:SF76">
    <property type="entry name" value="CARRIER DOMAIN-CONTAINING PROTEIN"/>
    <property type="match status" value="1"/>
</dbReference>
<dbReference type="Pfam" id="PF00550">
    <property type="entry name" value="PP-binding"/>
    <property type="match status" value="1"/>
</dbReference>
<dbReference type="SUPFAM" id="SSF47336">
    <property type="entry name" value="ACP-like"/>
    <property type="match status" value="1"/>
</dbReference>
<dbReference type="PROSITE" id="PS50075">
    <property type="entry name" value="CARRIER"/>
    <property type="match status" value="1"/>
</dbReference>
<dbReference type="PROSITE" id="PS00012">
    <property type="entry name" value="PHOSPHOPANTETHEINE"/>
    <property type="match status" value="1"/>
</dbReference>
<gene>
    <name evidence="1" type="primary">acpP</name>
    <name type="ordered locus">YPA_1925</name>
</gene>
<reference key="1">
    <citation type="journal article" date="2006" name="J. Bacteriol.">
        <title>Complete genome sequence of Yersinia pestis strains Antiqua and Nepal516: evidence of gene reduction in an emerging pathogen.</title>
        <authorList>
            <person name="Chain P.S.G."/>
            <person name="Hu P."/>
            <person name="Malfatti S.A."/>
            <person name="Radnedge L."/>
            <person name="Larimer F."/>
            <person name="Vergez L.M."/>
            <person name="Worsham P."/>
            <person name="Chu M.C."/>
            <person name="Andersen G.L."/>
        </authorList>
    </citation>
    <scope>NUCLEOTIDE SEQUENCE [LARGE SCALE GENOMIC DNA]</scope>
    <source>
        <strain>Antiqua</strain>
    </source>
</reference>
<name>ACP_YERPA</name>
<organism>
    <name type="scientific">Yersinia pestis bv. Antiqua (strain Antiqua)</name>
    <dbReference type="NCBI Taxonomy" id="360102"/>
    <lineage>
        <taxon>Bacteria</taxon>
        <taxon>Pseudomonadati</taxon>
        <taxon>Pseudomonadota</taxon>
        <taxon>Gammaproteobacteria</taxon>
        <taxon>Enterobacterales</taxon>
        <taxon>Yersiniaceae</taxon>
        <taxon>Yersinia</taxon>
    </lineage>
</organism>
<evidence type="ECO:0000255" key="1">
    <source>
        <dbReference type="HAMAP-Rule" id="MF_01217"/>
    </source>
</evidence>
<evidence type="ECO:0000255" key="2">
    <source>
        <dbReference type="PROSITE-ProRule" id="PRU00258"/>
    </source>
</evidence>
<keyword id="KW-0963">Cytoplasm</keyword>
<keyword id="KW-0275">Fatty acid biosynthesis</keyword>
<keyword id="KW-0276">Fatty acid metabolism</keyword>
<keyword id="KW-0444">Lipid biosynthesis</keyword>
<keyword id="KW-0443">Lipid metabolism</keyword>
<keyword id="KW-0596">Phosphopantetheine</keyword>
<keyword id="KW-0597">Phosphoprotein</keyword>
<feature type="chain" id="PRO_1000066721" description="Acyl carrier protein">
    <location>
        <begin position="1"/>
        <end position="78"/>
    </location>
</feature>
<feature type="domain" description="Carrier" evidence="2">
    <location>
        <begin position="2"/>
        <end position="77"/>
    </location>
</feature>
<feature type="modified residue" description="O-(pantetheine 4'-phosphoryl)serine" evidence="2">
    <location>
        <position position="37"/>
    </location>
</feature>
<protein>
    <recommendedName>
        <fullName evidence="1">Acyl carrier protein</fullName>
        <shortName evidence="1">ACP</shortName>
    </recommendedName>
</protein>
<proteinExistence type="inferred from homology"/>
<comment type="function">
    <text evidence="1">Carrier of the growing fatty acid chain in fatty acid biosynthesis.</text>
</comment>
<comment type="pathway">
    <text evidence="1">Lipid metabolism; fatty acid biosynthesis.</text>
</comment>
<comment type="subcellular location">
    <subcellularLocation>
        <location evidence="1">Cytoplasm</location>
    </subcellularLocation>
</comment>
<comment type="PTM">
    <text evidence="1">4'-phosphopantetheine is transferred from CoA to a specific serine of apo-ACP by AcpS. This modification is essential for activity because fatty acids are bound in thioester linkage to the sulfhydryl of the prosthetic group.</text>
</comment>
<comment type="similarity">
    <text evidence="1">Belongs to the acyl carrier protein (ACP) family.</text>
</comment>
<sequence>MSTIEERVKKIIVEQLGVKEDEVKNSASFVEDLGADSLDTVELVMALEEEFDTEIPDEEAEKITTVQAAIDFINANQQ</sequence>
<accession>Q1C6N1</accession>